<protein>
    <recommendedName>
        <fullName>Uncharacterized transcriptional regulatory protein YLR278C</fullName>
    </recommendedName>
</protein>
<proteinExistence type="evidence at protein level"/>
<dbReference type="EMBL" id="U17243">
    <property type="protein sequence ID" value="AAB67326.1"/>
    <property type="molecule type" value="Genomic_DNA"/>
</dbReference>
<dbReference type="EMBL" id="U17245">
    <property type="protein sequence ID" value="AAB67370.1"/>
    <property type="molecule type" value="Genomic_DNA"/>
</dbReference>
<dbReference type="EMBL" id="BK006945">
    <property type="protein sequence ID" value="DAA09591.1"/>
    <property type="molecule type" value="Genomic_DNA"/>
</dbReference>
<dbReference type="PIR" id="S50366">
    <property type="entry name" value="S50366"/>
</dbReference>
<dbReference type="RefSeq" id="NP_013380.1">
    <property type="nucleotide sequence ID" value="NM_001182165.1"/>
</dbReference>
<dbReference type="SMR" id="Q05854"/>
<dbReference type="BioGRID" id="31546">
    <property type="interactions" value="189"/>
</dbReference>
<dbReference type="DIP" id="DIP-7433N"/>
<dbReference type="FunCoup" id="Q05854">
    <property type="interactions" value="564"/>
</dbReference>
<dbReference type="IntAct" id="Q05854">
    <property type="interactions" value="31"/>
</dbReference>
<dbReference type="MINT" id="Q05854"/>
<dbReference type="STRING" id="4932.YLR278C"/>
<dbReference type="GlyGen" id="Q05854">
    <property type="glycosylation" value="1 site"/>
</dbReference>
<dbReference type="iPTMnet" id="Q05854"/>
<dbReference type="PaxDb" id="4932-YLR278C"/>
<dbReference type="PeptideAtlas" id="Q05854"/>
<dbReference type="EnsemblFungi" id="YLR278C_mRNA">
    <property type="protein sequence ID" value="YLR278C"/>
    <property type="gene ID" value="YLR278C"/>
</dbReference>
<dbReference type="GeneID" id="850984"/>
<dbReference type="KEGG" id="sce:YLR278C"/>
<dbReference type="AGR" id="SGD:S000004268"/>
<dbReference type="SGD" id="S000004268">
    <property type="gene designation" value="YLR278C"/>
</dbReference>
<dbReference type="VEuPathDB" id="FungiDB:YLR278C"/>
<dbReference type="eggNOG" id="ENOG502QS9Q">
    <property type="taxonomic scope" value="Eukaryota"/>
</dbReference>
<dbReference type="GeneTree" id="ENSGT00940000176304"/>
<dbReference type="HOGENOM" id="CLU_004038_1_0_1"/>
<dbReference type="InParanoid" id="Q05854"/>
<dbReference type="OMA" id="AHDMINN"/>
<dbReference type="OrthoDB" id="2399539at2759"/>
<dbReference type="BioCyc" id="YEAST:G3O-32377-MONOMER"/>
<dbReference type="BioGRID-ORCS" id="850984">
    <property type="hits" value="5 hits in 13 CRISPR screens"/>
</dbReference>
<dbReference type="PRO" id="PR:Q05854"/>
<dbReference type="Proteomes" id="UP000002311">
    <property type="component" value="Chromosome XII"/>
</dbReference>
<dbReference type="RNAct" id="Q05854">
    <property type="molecule type" value="protein"/>
</dbReference>
<dbReference type="GO" id="GO:0005634">
    <property type="term" value="C:nucleus"/>
    <property type="evidence" value="ECO:0007005"/>
    <property type="project" value="SGD"/>
</dbReference>
<dbReference type="GO" id="GO:0000981">
    <property type="term" value="F:DNA-binding transcription factor activity, RNA polymerase II-specific"/>
    <property type="evidence" value="ECO:0000318"/>
    <property type="project" value="GO_Central"/>
</dbReference>
<dbReference type="GO" id="GO:0043565">
    <property type="term" value="F:sequence-specific DNA binding"/>
    <property type="evidence" value="ECO:0000318"/>
    <property type="project" value="GO_Central"/>
</dbReference>
<dbReference type="GO" id="GO:0008270">
    <property type="term" value="F:zinc ion binding"/>
    <property type="evidence" value="ECO:0007669"/>
    <property type="project" value="InterPro"/>
</dbReference>
<dbReference type="GO" id="GO:0006351">
    <property type="term" value="P:DNA-templated transcription"/>
    <property type="evidence" value="ECO:0007669"/>
    <property type="project" value="InterPro"/>
</dbReference>
<dbReference type="GO" id="GO:0045944">
    <property type="term" value="P:positive regulation of transcription by RNA polymerase II"/>
    <property type="evidence" value="ECO:0000318"/>
    <property type="project" value="GO_Central"/>
</dbReference>
<dbReference type="CDD" id="cd12148">
    <property type="entry name" value="fungal_TF_MHR"/>
    <property type="match status" value="1"/>
</dbReference>
<dbReference type="CDD" id="cd00067">
    <property type="entry name" value="GAL4"/>
    <property type="match status" value="1"/>
</dbReference>
<dbReference type="FunFam" id="4.10.240.10:FF:000048">
    <property type="entry name" value="YLR278C"/>
    <property type="match status" value="1"/>
</dbReference>
<dbReference type="Gene3D" id="4.10.240.10">
    <property type="entry name" value="Zn(2)-C6 fungal-type DNA-binding domain"/>
    <property type="match status" value="1"/>
</dbReference>
<dbReference type="InterPro" id="IPR007219">
    <property type="entry name" value="Transcription_factor_dom_fun"/>
</dbReference>
<dbReference type="InterPro" id="IPR052202">
    <property type="entry name" value="Yeast_MetPath_Reg"/>
</dbReference>
<dbReference type="InterPro" id="IPR036864">
    <property type="entry name" value="Zn2-C6_fun-type_DNA-bd_sf"/>
</dbReference>
<dbReference type="InterPro" id="IPR001138">
    <property type="entry name" value="Zn2Cys6_DnaBD"/>
</dbReference>
<dbReference type="PANTHER" id="PTHR47782:SF12">
    <property type="entry name" value="ZN(II)2CYS6 TRANSCRIPTION FACTOR (EUROFUNG)"/>
    <property type="match status" value="1"/>
</dbReference>
<dbReference type="PANTHER" id="PTHR47782">
    <property type="entry name" value="ZN(II)2CYS6 TRANSCRIPTION FACTOR (EUROFUNG)-RELATED"/>
    <property type="match status" value="1"/>
</dbReference>
<dbReference type="Pfam" id="PF04082">
    <property type="entry name" value="Fungal_trans"/>
    <property type="match status" value="1"/>
</dbReference>
<dbReference type="Pfam" id="PF00172">
    <property type="entry name" value="Zn_clus"/>
    <property type="match status" value="1"/>
</dbReference>
<dbReference type="SMART" id="SM00906">
    <property type="entry name" value="Fungal_trans"/>
    <property type="match status" value="1"/>
</dbReference>
<dbReference type="SMART" id="SM00066">
    <property type="entry name" value="GAL4"/>
    <property type="match status" value="1"/>
</dbReference>
<dbReference type="SUPFAM" id="SSF57701">
    <property type="entry name" value="Zn2/Cys6 DNA-binding domain"/>
    <property type="match status" value="1"/>
</dbReference>
<dbReference type="PROSITE" id="PS00463">
    <property type="entry name" value="ZN2_CY6_FUNGAL_1"/>
    <property type="match status" value="1"/>
</dbReference>
<dbReference type="PROSITE" id="PS50048">
    <property type="entry name" value="ZN2_CY6_FUNGAL_2"/>
    <property type="match status" value="1"/>
</dbReference>
<accession>Q05854</accession>
<accession>D6VYS5</accession>
<evidence type="ECO:0000255" key="1">
    <source>
        <dbReference type="PROSITE-ProRule" id="PRU00227"/>
    </source>
</evidence>
<evidence type="ECO:0000256" key="2">
    <source>
        <dbReference type="SAM" id="MobiDB-lite"/>
    </source>
</evidence>
<evidence type="ECO:0000269" key="3">
    <source>
    </source>
</evidence>
<evidence type="ECO:0000305" key="4"/>
<evidence type="ECO:0007744" key="5">
    <source>
    </source>
</evidence>
<sequence length="1341" mass="151279">MGRPRKNVSQEKIQQLKRELELAGNRTDVLLQDKKGRSRSCLLCRRRKQRCDHKLPSCTACLKAGIKCVQPSKYSSSTSNSNTNNNTPTAGTVPPTPHPVIKRELQDSSIGAGAGAATSLNDMTIIKPISTSNSNVDAGDANEFRKTIKSVTTNSNPNLMRQDKDQYTIFLEKKLKSLETLLDLSPGCNQYNYELSQYKKVSHLFSNNTSDYSRPNSSNMVILPLPSPSNKPLENTNNNGSNVNAATNDTSASTNNINNNNAICQSASLLNDPLETLDFTKCIFAKYNLKKEFLMYDPIFELNEKLSRSFLDTFFTRLQFKYPILDEQEIYTFYDHYLHNKILIPPSSPATSSAAPPSNSHSYSEIEFHFLSGRMWLVFSISAYLLMTTGKYKGFPPHRYFSTAIRHITKCGLHLNYVQQIELLTLLVLYIIRTDRDSLILYDIIKDVMGISKKKLHLNQWYPNDPFANKKLRLFWCVYLLERMICVAVGKPYTIKESEINLPLFNNDSFYTKGVHAAAPSTNDHGVQFINQSLKLRRIESQFVETLQLLKNDSRSVKQSIDQLPLVRKFFEDLEVWRKSYSTLDVKNFENETLKLYYYRSVRLLIQPYLEFFAPEDRLFRECQAAAGQICQLYKIFHQKTLNGHSTPAVHTVFVAGVTLIYCMWLARNFDDQRRKKLGDASKHTRPLISASLFSTMDDLRACSVCLYVMTERSNFARTFRDTFDQLMNATVGNLIERCGPDSSELIFMASSVAKRTEPKNINDEANKAISSGDTLHDSNSANAANLSNSNDKNISHNGGMPPAVARIFGKGQAEEHAGFVENSQVDLAEQEKFKKKQGVLEKTSVPKSLAHLLTKMDDRSRISNSSMSYTTSSSSSSSSSSSSSTLSFPSSQEKNLKINVNNDNNGMTISSVNREHNNNHNNNNDNNNNNNNNNNNSNNNNNVNNNDNESNSRSTTNNSCNNGNNSQYVRNNNVTMENDVERPIQDQYIVKKPTNQTEFDWQVFQQQAFLQQQLAQHNLQAYLSSLNTDTMTNRSPSKSSSISTASSHSDPIPIAMTQSPTPYPQTSNMLPQQHVSRPLPQQQREQPQQHITSPQRFSESNFTNQLNNGMINSNPLQSAIFSNHTSENKQLRDVEESNFSTSPLRADYGNNIISSIPASFTSNSIPVSVKQARNGSSSGDILFSNGAHDMINNISTWTNNSVLDALNSKSILQTIFPQSQEPSSLSMDKQQQQHQQQNMCSENNVTANNFQQTQNDPSYNRNLFMMSNQEGVQYNLDETEKNGPKTQVEANTSANLHFDNVIPTVTNADIRKKRSNWDNMMTSGPVEDFWTINDDYGFLT</sequence>
<organism>
    <name type="scientific">Saccharomyces cerevisiae (strain ATCC 204508 / S288c)</name>
    <name type="common">Baker's yeast</name>
    <dbReference type="NCBI Taxonomy" id="559292"/>
    <lineage>
        <taxon>Eukaryota</taxon>
        <taxon>Fungi</taxon>
        <taxon>Dikarya</taxon>
        <taxon>Ascomycota</taxon>
        <taxon>Saccharomycotina</taxon>
        <taxon>Saccharomycetes</taxon>
        <taxon>Saccharomycetales</taxon>
        <taxon>Saccharomycetaceae</taxon>
        <taxon>Saccharomyces</taxon>
    </lineage>
</organism>
<gene>
    <name type="ordered locus">YLR278C</name>
    <name type="ORF">L8003.10</name>
</gene>
<comment type="subcellular location">
    <subcellularLocation>
        <location evidence="4">Nucleus</location>
    </subcellularLocation>
</comment>
<comment type="miscellaneous">
    <text evidence="3">Present with 1080 molecules/cell in log phase SD medium.</text>
</comment>
<keyword id="KW-0238">DNA-binding</keyword>
<keyword id="KW-0479">Metal-binding</keyword>
<keyword id="KW-0539">Nucleus</keyword>
<keyword id="KW-0597">Phosphoprotein</keyword>
<keyword id="KW-1185">Reference proteome</keyword>
<keyword id="KW-0804">Transcription</keyword>
<keyword id="KW-0805">Transcription regulation</keyword>
<keyword id="KW-0862">Zinc</keyword>
<name>YL278_YEAST</name>
<reference key="1">
    <citation type="journal article" date="1997" name="Nature">
        <title>The nucleotide sequence of Saccharomyces cerevisiae chromosome XII.</title>
        <authorList>
            <person name="Johnston M."/>
            <person name="Hillier L.W."/>
            <person name="Riles L."/>
            <person name="Albermann K."/>
            <person name="Andre B."/>
            <person name="Ansorge W."/>
            <person name="Benes V."/>
            <person name="Brueckner M."/>
            <person name="Delius H."/>
            <person name="Dubois E."/>
            <person name="Duesterhoeft A."/>
            <person name="Entian K.-D."/>
            <person name="Floeth M."/>
            <person name="Goffeau A."/>
            <person name="Hebling U."/>
            <person name="Heumann K."/>
            <person name="Heuss-Neitzel D."/>
            <person name="Hilbert H."/>
            <person name="Hilger F."/>
            <person name="Kleine K."/>
            <person name="Koetter P."/>
            <person name="Louis E.J."/>
            <person name="Messenguy F."/>
            <person name="Mewes H.-W."/>
            <person name="Miosga T."/>
            <person name="Moestl D."/>
            <person name="Mueller-Auer S."/>
            <person name="Nentwich U."/>
            <person name="Obermaier B."/>
            <person name="Piravandi E."/>
            <person name="Pohl T.M."/>
            <person name="Portetelle D."/>
            <person name="Purnelle B."/>
            <person name="Rechmann S."/>
            <person name="Rieger M."/>
            <person name="Rinke M."/>
            <person name="Rose M."/>
            <person name="Scharfe M."/>
            <person name="Scherens B."/>
            <person name="Scholler P."/>
            <person name="Schwager C."/>
            <person name="Schwarz S."/>
            <person name="Underwood A.P."/>
            <person name="Urrestarazu L.A."/>
            <person name="Vandenbol M."/>
            <person name="Verhasselt P."/>
            <person name="Vierendeels F."/>
            <person name="Voet M."/>
            <person name="Volckaert G."/>
            <person name="Voss H."/>
            <person name="Wambutt R."/>
            <person name="Wedler E."/>
            <person name="Wedler H."/>
            <person name="Zimmermann F.K."/>
            <person name="Zollner A."/>
            <person name="Hani J."/>
            <person name="Hoheisel J.D."/>
        </authorList>
    </citation>
    <scope>NUCLEOTIDE SEQUENCE [LARGE SCALE GENOMIC DNA]</scope>
    <source>
        <strain>ATCC 204508 / S288c</strain>
    </source>
</reference>
<reference key="2">
    <citation type="journal article" date="2014" name="G3 (Bethesda)">
        <title>The reference genome sequence of Saccharomyces cerevisiae: Then and now.</title>
        <authorList>
            <person name="Engel S.R."/>
            <person name="Dietrich F.S."/>
            <person name="Fisk D.G."/>
            <person name="Binkley G."/>
            <person name="Balakrishnan R."/>
            <person name="Costanzo M.C."/>
            <person name="Dwight S.S."/>
            <person name="Hitz B.C."/>
            <person name="Karra K."/>
            <person name="Nash R.S."/>
            <person name="Weng S."/>
            <person name="Wong E.D."/>
            <person name="Lloyd P."/>
            <person name="Skrzypek M.S."/>
            <person name="Miyasato S.R."/>
            <person name="Simison M."/>
            <person name="Cherry J.M."/>
        </authorList>
    </citation>
    <scope>GENOME REANNOTATION</scope>
    <source>
        <strain>ATCC 204508 / S288c</strain>
    </source>
</reference>
<reference key="3">
    <citation type="journal article" date="2003" name="Nature">
        <title>Global analysis of protein expression in yeast.</title>
        <authorList>
            <person name="Ghaemmaghami S."/>
            <person name="Huh W.-K."/>
            <person name="Bower K."/>
            <person name="Howson R.W."/>
            <person name="Belle A."/>
            <person name="Dephoure N."/>
            <person name="O'Shea E.K."/>
            <person name="Weissman J.S."/>
        </authorList>
    </citation>
    <scope>LEVEL OF PROTEIN EXPRESSION [LARGE SCALE ANALYSIS]</scope>
</reference>
<reference key="4">
    <citation type="journal article" date="2007" name="J. Proteome Res.">
        <title>Large-scale phosphorylation analysis of alpha-factor-arrested Saccharomyces cerevisiae.</title>
        <authorList>
            <person name="Li X."/>
            <person name="Gerber S.A."/>
            <person name="Rudner A.D."/>
            <person name="Beausoleil S.A."/>
            <person name="Haas W."/>
            <person name="Villen J."/>
            <person name="Elias J.E."/>
            <person name="Gygi S.P."/>
        </authorList>
    </citation>
    <scope>PHOSPHORYLATION [LARGE SCALE ANALYSIS] AT SER-1143</scope>
    <scope>IDENTIFICATION BY MASS SPECTROMETRY [LARGE SCALE ANALYSIS]</scope>
    <source>
        <strain>ADR376</strain>
    </source>
</reference>
<reference key="5">
    <citation type="journal article" date="2008" name="Mol. Cell. Proteomics">
        <title>A multidimensional chromatography technology for in-depth phosphoproteome analysis.</title>
        <authorList>
            <person name="Albuquerque C.P."/>
            <person name="Smolka M.B."/>
            <person name="Payne S.H."/>
            <person name="Bafna V."/>
            <person name="Eng J."/>
            <person name="Zhou H."/>
        </authorList>
    </citation>
    <scope>IDENTIFICATION BY MASS SPECTROMETRY [LARGE SCALE ANALYSIS]</scope>
</reference>
<reference key="6">
    <citation type="journal article" date="2009" name="Science">
        <title>Global analysis of Cdk1 substrate phosphorylation sites provides insights into evolution.</title>
        <authorList>
            <person name="Holt L.J."/>
            <person name="Tuch B.B."/>
            <person name="Villen J."/>
            <person name="Johnson A.D."/>
            <person name="Gygi S.P."/>
            <person name="Morgan D.O."/>
        </authorList>
    </citation>
    <scope>IDENTIFICATION BY MASS SPECTROMETRY [LARGE SCALE ANALYSIS]</scope>
</reference>
<feature type="chain" id="PRO_0000115003" description="Uncharacterized transcriptional regulatory protein YLR278C">
    <location>
        <begin position="1"/>
        <end position="1341"/>
    </location>
</feature>
<feature type="DNA-binding region" description="Zn(2)-C6 fungal-type" evidence="1">
    <location>
        <begin position="41"/>
        <end position="68"/>
    </location>
</feature>
<feature type="region of interest" description="Disordered" evidence="2">
    <location>
        <begin position="72"/>
        <end position="100"/>
    </location>
</feature>
<feature type="region of interest" description="Disordered" evidence="2">
    <location>
        <begin position="770"/>
        <end position="804"/>
    </location>
</feature>
<feature type="region of interest" description="Disordered" evidence="2">
    <location>
        <begin position="864"/>
        <end position="971"/>
    </location>
</feature>
<feature type="region of interest" description="Disordered" evidence="2">
    <location>
        <begin position="1031"/>
        <end position="1116"/>
    </location>
</feature>
<feature type="region of interest" description="Disordered" evidence="2">
    <location>
        <begin position="1220"/>
        <end position="1240"/>
    </location>
</feature>
<feature type="compositionally biased region" description="Low complexity" evidence="2">
    <location>
        <begin position="72"/>
        <end position="93"/>
    </location>
</feature>
<feature type="compositionally biased region" description="Low complexity" evidence="2">
    <location>
        <begin position="779"/>
        <end position="791"/>
    </location>
</feature>
<feature type="compositionally biased region" description="Low complexity" evidence="2">
    <location>
        <begin position="864"/>
        <end position="906"/>
    </location>
</feature>
<feature type="compositionally biased region" description="Low complexity" evidence="2">
    <location>
        <begin position="920"/>
        <end position="967"/>
    </location>
</feature>
<feature type="compositionally biased region" description="Low complexity" evidence="2">
    <location>
        <begin position="1036"/>
        <end position="1050"/>
    </location>
</feature>
<feature type="compositionally biased region" description="Polar residues" evidence="2">
    <location>
        <begin position="1057"/>
        <end position="1076"/>
    </location>
</feature>
<feature type="compositionally biased region" description="Low complexity" evidence="2">
    <location>
        <begin position="1078"/>
        <end position="1090"/>
    </location>
</feature>
<feature type="compositionally biased region" description="Polar residues" evidence="2">
    <location>
        <begin position="1091"/>
        <end position="1116"/>
    </location>
</feature>
<feature type="compositionally biased region" description="Polar residues" evidence="2">
    <location>
        <begin position="1220"/>
        <end position="1230"/>
    </location>
</feature>
<feature type="modified residue" description="Phosphoserine" evidence="5">
    <location>
        <position position="1143"/>
    </location>
</feature>